<reference key="1">
    <citation type="journal article" date="2003" name="Mol. Cell">
        <title>Phosphorylation of hUPF1 induces formation of mRNA surveillance complexes containing hSMG-5 and hSMG-7.</title>
        <authorList>
            <person name="Ohnishi T."/>
            <person name="Yamashita A."/>
            <person name="Kashima I."/>
            <person name="Schell T."/>
            <person name="Anders K.R."/>
            <person name="Grimson A."/>
            <person name="Hachiya T."/>
            <person name="Hentze M.W."/>
            <person name="Anderson P."/>
            <person name="Ohno S."/>
        </authorList>
    </citation>
    <scope>NUCLEOTIDE SEQUENCE [MRNA] (ISOFORM 1)</scope>
    <scope>SUBCELLULAR LOCATION</scope>
    <scope>IDENTIFICATION IN A COMPLEX CONTAINING SMG5; SMG7; UPF1; PPP2CA AND UPF3</scope>
</reference>
<reference key="2">
    <citation type="journal article" date="1996" name="DNA Res.">
        <title>Prediction of the coding sequences of unidentified human genes. VI. The coding sequences of 80 new genes (KIAA0201-KIAA0280) deduced by analysis of cDNA clones from cell line KG-1 and brain.</title>
        <authorList>
            <person name="Nagase T."/>
            <person name="Seki N."/>
            <person name="Ishikawa K."/>
            <person name="Ohira M."/>
            <person name="Kawarabayasi Y."/>
            <person name="Ohara O."/>
            <person name="Tanaka A."/>
            <person name="Kotani H."/>
            <person name="Miyajima N."/>
            <person name="Nomura N."/>
        </authorList>
    </citation>
    <scope>NUCLEOTIDE SEQUENCE [LARGE SCALE MRNA] (ISOFORM 2)</scope>
    <scope>VARIANT ILE-900</scope>
    <source>
        <tissue>Bone marrow</tissue>
    </source>
</reference>
<reference key="3">
    <citation type="journal article" date="2002" name="DNA Res.">
        <title>Construction of expression-ready cDNA clones for KIAA genes: manual curation of 330 KIAA cDNA clones.</title>
        <authorList>
            <person name="Nakajima D."/>
            <person name="Okazaki N."/>
            <person name="Yamakawa H."/>
            <person name="Kikuno R."/>
            <person name="Ohara O."/>
            <person name="Nagase T."/>
        </authorList>
    </citation>
    <scope>SEQUENCE REVISION</scope>
</reference>
<reference key="4">
    <citation type="journal article" date="2004" name="Nat. Genet.">
        <title>Complete sequencing and characterization of 21,243 full-length human cDNAs.</title>
        <authorList>
            <person name="Ota T."/>
            <person name="Suzuki Y."/>
            <person name="Nishikawa T."/>
            <person name="Otsuki T."/>
            <person name="Sugiyama T."/>
            <person name="Irie R."/>
            <person name="Wakamatsu A."/>
            <person name="Hayashi K."/>
            <person name="Sato H."/>
            <person name="Nagai K."/>
            <person name="Kimura K."/>
            <person name="Makita H."/>
            <person name="Sekine M."/>
            <person name="Obayashi M."/>
            <person name="Nishi T."/>
            <person name="Shibahara T."/>
            <person name="Tanaka T."/>
            <person name="Ishii S."/>
            <person name="Yamamoto J."/>
            <person name="Saito K."/>
            <person name="Kawai Y."/>
            <person name="Isono Y."/>
            <person name="Nakamura Y."/>
            <person name="Nagahari K."/>
            <person name="Murakami K."/>
            <person name="Yasuda T."/>
            <person name="Iwayanagi T."/>
            <person name="Wagatsuma M."/>
            <person name="Shiratori A."/>
            <person name="Sudo H."/>
            <person name="Hosoiri T."/>
            <person name="Kaku Y."/>
            <person name="Kodaira H."/>
            <person name="Kondo H."/>
            <person name="Sugawara M."/>
            <person name="Takahashi M."/>
            <person name="Kanda K."/>
            <person name="Yokoi T."/>
            <person name="Furuya T."/>
            <person name="Kikkawa E."/>
            <person name="Omura Y."/>
            <person name="Abe K."/>
            <person name="Kamihara K."/>
            <person name="Katsuta N."/>
            <person name="Sato K."/>
            <person name="Tanikawa M."/>
            <person name="Yamazaki M."/>
            <person name="Ninomiya K."/>
            <person name="Ishibashi T."/>
            <person name="Yamashita H."/>
            <person name="Murakawa K."/>
            <person name="Fujimori K."/>
            <person name="Tanai H."/>
            <person name="Kimata M."/>
            <person name="Watanabe M."/>
            <person name="Hiraoka S."/>
            <person name="Chiba Y."/>
            <person name="Ishida S."/>
            <person name="Ono Y."/>
            <person name="Takiguchi S."/>
            <person name="Watanabe S."/>
            <person name="Yosida M."/>
            <person name="Hotuta T."/>
            <person name="Kusano J."/>
            <person name="Kanehori K."/>
            <person name="Takahashi-Fujii A."/>
            <person name="Hara H."/>
            <person name="Tanase T.-O."/>
            <person name="Nomura Y."/>
            <person name="Togiya S."/>
            <person name="Komai F."/>
            <person name="Hara R."/>
            <person name="Takeuchi K."/>
            <person name="Arita M."/>
            <person name="Imose N."/>
            <person name="Musashino K."/>
            <person name="Yuuki H."/>
            <person name="Oshima A."/>
            <person name="Sasaki N."/>
            <person name="Aotsuka S."/>
            <person name="Yoshikawa Y."/>
            <person name="Matsunawa H."/>
            <person name="Ichihara T."/>
            <person name="Shiohata N."/>
            <person name="Sano S."/>
            <person name="Moriya S."/>
            <person name="Momiyama H."/>
            <person name="Satoh N."/>
            <person name="Takami S."/>
            <person name="Terashima Y."/>
            <person name="Suzuki O."/>
            <person name="Nakagawa S."/>
            <person name="Senoh A."/>
            <person name="Mizoguchi H."/>
            <person name="Goto Y."/>
            <person name="Shimizu F."/>
            <person name="Wakebe H."/>
            <person name="Hishigaki H."/>
            <person name="Watanabe T."/>
            <person name="Sugiyama A."/>
            <person name="Takemoto M."/>
            <person name="Kawakami B."/>
            <person name="Yamazaki M."/>
            <person name="Watanabe K."/>
            <person name="Kumagai A."/>
            <person name="Itakura S."/>
            <person name="Fukuzumi Y."/>
            <person name="Fujimori Y."/>
            <person name="Komiyama M."/>
            <person name="Tashiro H."/>
            <person name="Tanigami A."/>
            <person name="Fujiwara T."/>
            <person name="Ono T."/>
            <person name="Yamada K."/>
            <person name="Fujii Y."/>
            <person name="Ozaki K."/>
            <person name="Hirao M."/>
            <person name="Ohmori Y."/>
            <person name="Kawabata A."/>
            <person name="Hikiji T."/>
            <person name="Kobatake N."/>
            <person name="Inagaki H."/>
            <person name="Ikema Y."/>
            <person name="Okamoto S."/>
            <person name="Okitani R."/>
            <person name="Kawakami T."/>
            <person name="Noguchi S."/>
            <person name="Itoh T."/>
            <person name="Shigeta K."/>
            <person name="Senba T."/>
            <person name="Matsumura K."/>
            <person name="Nakajima Y."/>
            <person name="Mizuno T."/>
            <person name="Morinaga M."/>
            <person name="Sasaki M."/>
            <person name="Togashi T."/>
            <person name="Oyama M."/>
            <person name="Hata H."/>
            <person name="Watanabe M."/>
            <person name="Komatsu T."/>
            <person name="Mizushima-Sugano J."/>
            <person name="Satoh T."/>
            <person name="Shirai Y."/>
            <person name="Takahashi Y."/>
            <person name="Nakagawa K."/>
            <person name="Okumura K."/>
            <person name="Nagase T."/>
            <person name="Nomura N."/>
            <person name="Kikuchi H."/>
            <person name="Masuho Y."/>
            <person name="Yamashita R."/>
            <person name="Nakai K."/>
            <person name="Yada T."/>
            <person name="Nakamura Y."/>
            <person name="Ohara O."/>
            <person name="Isogai T."/>
            <person name="Sugano S."/>
        </authorList>
    </citation>
    <scope>NUCLEOTIDE SEQUENCE [LARGE SCALE MRNA] (ISOFORM 5)</scope>
</reference>
<reference key="5">
    <citation type="journal article" date="2006" name="Nature">
        <title>The DNA sequence and biological annotation of human chromosome 1.</title>
        <authorList>
            <person name="Gregory S.G."/>
            <person name="Barlow K.F."/>
            <person name="McLay K.E."/>
            <person name="Kaul R."/>
            <person name="Swarbreck D."/>
            <person name="Dunham A."/>
            <person name="Scott C.E."/>
            <person name="Howe K.L."/>
            <person name="Woodfine K."/>
            <person name="Spencer C.C.A."/>
            <person name="Jones M.C."/>
            <person name="Gillson C."/>
            <person name="Searle S."/>
            <person name="Zhou Y."/>
            <person name="Kokocinski F."/>
            <person name="McDonald L."/>
            <person name="Evans R."/>
            <person name="Phillips K."/>
            <person name="Atkinson A."/>
            <person name="Cooper R."/>
            <person name="Jones C."/>
            <person name="Hall R.E."/>
            <person name="Andrews T.D."/>
            <person name="Lloyd C."/>
            <person name="Ainscough R."/>
            <person name="Almeida J.P."/>
            <person name="Ambrose K.D."/>
            <person name="Anderson F."/>
            <person name="Andrew R.W."/>
            <person name="Ashwell R.I.S."/>
            <person name="Aubin K."/>
            <person name="Babbage A.K."/>
            <person name="Bagguley C.L."/>
            <person name="Bailey J."/>
            <person name="Beasley H."/>
            <person name="Bethel G."/>
            <person name="Bird C.P."/>
            <person name="Bray-Allen S."/>
            <person name="Brown J.Y."/>
            <person name="Brown A.J."/>
            <person name="Buckley D."/>
            <person name="Burton J."/>
            <person name="Bye J."/>
            <person name="Carder C."/>
            <person name="Chapman J.C."/>
            <person name="Clark S.Y."/>
            <person name="Clarke G."/>
            <person name="Clee C."/>
            <person name="Cobley V."/>
            <person name="Collier R.E."/>
            <person name="Corby N."/>
            <person name="Coville G.J."/>
            <person name="Davies J."/>
            <person name="Deadman R."/>
            <person name="Dunn M."/>
            <person name="Earthrowl M."/>
            <person name="Ellington A.G."/>
            <person name="Errington H."/>
            <person name="Frankish A."/>
            <person name="Frankland J."/>
            <person name="French L."/>
            <person name="Garner P."/>
            <person name="Garnett J."/>
            <person name="Gay L."/>
            <person name="Ghori M.R.J."/>
            <person name="Gibson R."/>
            <person name="Gilby L.M."/>
            <person name="Gillett W."/>
            <person name="Glithero R.J."/>
            <person name="Grafham D.V."/>
            <person name="Griffiths C."/>
            <person name="Griffiths-Jones S."/>
            <person name="Grocock R."/>
            <person name="Hammond S."/>
            <person name="Harrison E.S.I."/>
            <person name="Hart E."/>
            <person name="Haugen E."/>
            <person name="Heath P.D."/>
            <person name="Holmes S."/>
            <person name="Holt K."/>
            <person name="Howden P.J."/>
            <person name="Hunt A.R."/>
            <person name="Hunt S.E."/>
            <person name="Hunter G."/>
            <person name="Isherwood J."/>
            <person name="James R."/>
            <person name="Johnson C."/>
            <person name="Johnson D."/>
            <person name="Joy A."/>
            <person name="Kay M."/>
            <person name="Kershaw J.K."/>
            <person name="Kibukawa M."/>
            <person name="Kimberley A.M."/>
            <person name="King A."/>
            <person name="Knights A.J."/>
            <person name="Lad H."/>
            <person name="Laird G."/>
            <person name="Lawlor S."/>
            <person name="Leongamornlert D.A."/>
            <person name="Lloyd D.M."/>
            <person name="Loveland J."/>
            <person name="Lovell J."/>
            <person name="Lush M.J."/>
            <person name="Lyne R."/>
            <person name="Martin S."/>
            <person name="Mashreghi-Mohammadi M."/>
            <person name="Matthews L."/>
            <person name="Matthews N.S.W."/>
            <person name="McLaren S."/>
            <person name="Milne S."/>
            <person name="Mistry S."/>
            <person name="Moore M.J.F."/>
            <person name="Nickerson T."/>
            <person name="O'Dell C.N."/>
            <person name="Oliver K."/>
            <person name="Palmeiri A."/>
            <person name="Palmer S.A."/>
            <person name="Parker A."/>
            <person name="Patel D."/>
            <person name="Pearce A.V."/>
            <person name="Peck A.I."/>
            <person name="Pelan S."/>
            <person name="Phelps K."/>
            <person name="Phillimore B.J."/>
            <person name="Plumb R."/>
            <person name="Rajan J."/>
            <person name="Raymond C."/>
            <person name="Rouse G."/>
            <person name="Saenphimmachak C."/>
            <person name="Sehra H.K."/>
            <person name="Sheridan E."/>
            <person name="Shownkeen R."/>
            <person name="Sims S."/>
            <person name="Skuce C.D."/>
            <person name="Smith M."/>
            <person name="Steward C."/>
            <person name="Subramanian S."/>
            <person name="Sycamore N."/>
            <person name="Tracey A."/>
            <person name="Tromans A."/>
            <person name="Van Helmond Z."/>
            <person name="Wall M."/>
            <person name="Wallis J.M."/>
            <person name="White S."/>
            <person name="Whitehead S.L."/>
            <person name="Wilkinson J.E."/>
            <person name="Willey D.L."/>
            <person name="Williams H."/>
            <person name="Wilming L."/>
            <person name="Wray P.W."/>
            <person name="Wu Z."/>
            <person name="Coulson A."/>
            <person name="Vaudin M."/>
            <person name="Sulston J.E."/>
            <person name="Durbin R.M."/>
            <person name="Hubbard T."/>
            <person name="Wooster R."/>
            <person name="Dunham I."/>
            <person name="Carter N.P."/>
            <person name="McVean G."/>
            <person name="Ross M.T."/>
            <person name="Harrow J."/>
            <person name="Olson M.V."/>
            <person name="Beck S."/>
            <person name="Rogers J."/>
            <person name="Bentley D.R."/>
        </authorList>
    </citation>
    <scope>NUCLEOTIDE SEQUENCE [LARGE SCALE GENOMIC DNA]</scope>
</reference>
<reference key="6">
    <citation type="journal article" date="2004" name="Genome Res.">
        <title>The status, quality, and expansion of the NIH full-length cDNA project: the Mammalian Gene Collection (MGC).</title>
        <authorList>
            <consortium name="The MGC Project Team"/>
        </authorList>
    </citation>
    <scope>NUCLEOTIDE SEQUENCE [LARGE SCALE MRNA] (ISOFORMS 2 AND 4)</scope>
    <scope>VARIANT ILE-900</scope>
    <source>
        <tissue>Testis</tissue>
    </source>
</reference>
<reference key="7">
    <citation type="journal article" date="2004" name="Mol. Cell">
        <title>SMG7 acts as a molecular link between mRNA surveillance and mRNA decay.</title>
        <authorList>
            <person name="Unterholzner L."/>
            <person name="Izaurralde E."/>
        </authorList>
    </citation>
    <scope>FUNCTION</scope>
    <scope>SUBCELLULAR LOCATION</scope>
    <scope>ASSOCIATION WITH CYTOPLASMIC MRNA DECAY BODIES</scope>
</reference>
<reference key="8">
    <citation type="journal article" date="2006" name="Cell">
        <title>Global, in vivo, and site-specific phosphorylation dynamics in signaling networks.</title>
        <authorList>
            <person name="Olsen J.V."/>
            <person name="Blagoev B."/>
            <person name="Gnad F."/>
            <person name="Macek B."/>
            <person name="Kumar C."/>
            <person name="Mortensen P."/>
            <person name="Mann M."/>
        </authorList>
    </citation>
    <scope>PHOSPHORYLATION [LARGE SCALE ANALYSIS] AT SER-781</scope>
    <scope>IDENTIFICATION BY MASS SPECTROMETRY [LARGE SCALE ANALYSIS]</scope>
    <source>
        <tissue>Cervix carcinoma</tissue>
    </source>
</reference>
<reference key="9">
    <citation type="journal article" date="2008" name="Mol. Cell">
        <title>Kinase-selective enrichment enables quantitative phosphoproteomics of the kinome across the cell cycle.</title>
        <authorList>
            <person name="Daub H."/>
            <person name="Olsen J.V."/>
            <person name="Bairlein M."/>
            <person name="Gnad F."/>
            <person name="Oppermann F.S."/>
            <person name="Korner R."/>
            <person name="Greff Z."/>
            <person name="Keri G."/>
            <person name="Stemmann O."/>
            <person name="Mann M."/>
        </authorList>
    </citation>
    <scope>PHOSPHORYLATION [LARGE SCALE ANALYSIS] AT SER-520 AND SER-781</scope>
    <scope>IDENTIFICATION BY MASS SPECTROMETRY [LARGE SCALE ANALYSIS]</scope>
    <source>
        <tissue>Cervix carcinoma</tissue>
    </source>
</reference>
<reference key="10">
    <citation type="journal article" date="2008" name="Proc. Natl. Acad. Sci. U.S.A.">
        <title>A quantitative atlas of mitotic phosphorylation.</title>
        <authorList>
            <person name="Dephoure N."/>
            <person name="Zhou C."/>
            <person name="Villen J."/>
            <person name="Beausoleil S.A."/>
            <person name="Bakalarski C.E."/>
            <person name="Elledge S.J."/>
            <person name="Gygi S.P."/>
        </authorList>
    </citation>
    <scope>IDENTIFICATION BY MASS SPECTROMETRY [LARGE SCALE ANALYSIS]</scope>
    <source>
        <tissue>Cervix carcinoma</tissue>
    </source>
</reference>
<reference key="11">
    <citation type="journal article" date="2009" name="Anal. Chem.">
        <title>Lys-N and trypsin cover complementary parts of the phosphoproteome in a refined SCX-based approach.</title>
        <authorList>
            <person name="Gauci S."/>
            <person name="Helbig A.O."/>
            <person name="Slijper M."/>
            <person name="Krijgsveld J."/>
            <person name="Heck A.J."/>
            <person name="Mohammed S."/>
        </authorList>
    </citation>
    <scope>ACETYLATION [LARGE SCALE ANALYSIS] AT SER-2</scope>
    <scope>CLEAVAGE OF INITIATOR METHIONINE [LARGE SCALE ANALYSIS]</scope>
    <scope>IDENTIFICATION BY MASS SPECTROMETRY [LARGE SCALE ANALYSIS]</scope>
</reference>
<reference key="12">
    <citation type="journal article" date="2009" name="Sci. Signal.">
        <title>Quantitative phosphoproteomic analysis of T cell receptor signaling reveals system-wide modulation of protein-protein interactions.</title>
        <authorList>
            <person name="Mayya V."/>
            <person name="Lundgren D.H."/>
            <person name="Hwang S.-I."/>
            <person name="Rezaul K."/>
            <person name="Wu L."/>
            <person name="Eng J.K."/>
            <person name="Rodionov V."/>
            <person name="Han D.K."/>
        </authorList>
    </citation>
    <scope>PHOSPHORYLATION [LARGE SCALE ANALYSIS] AT SER-781</scope>
    <scope>IDENTIFICATION BY MASS SPECTROMETRY [LARGE SCALE ANALYSIS]</scope>
    <source>
        <tissue>Leukemic T-cell</tissue>
    </source>
</reference>
<reference key="13">
    <citation type="journal article" date="2011" name="BMC Syst. Biol.">
        <title>Initial characterization of the human central proteome.</title>
        <authorList>
            <person name="Burkard T.R."/>
            <person name="Planyavsky M."/>
            <person name="Kaupe I."/>
            <person name="Breitwieser F.P."/>
            <person name="Buerckstuemmer T."/>
            <person name="Bennett K.L."/>
            <person name="Superti-Furga G."/>
            <person name="Colinge J."/>
        </authorList>
    </citation>
    <scope>IDENTIFICATION BY MASS SPECTROMETRY [LARGE SCALE ANALYSIS]</scope>
</reference>
<reference key="14">
    <citation type="journal article" date="2011" name="Sci. Signal.">
        <title>System-wide temporal characterization of the proteome and phosphoproteome of human embryonic stem cell differentiation.</title>
        <authorList>
            <person name="Rigbolt K.T."/>
            <person name="Prokhorova T.A."/>
            <person name="Akimov V."/>
            <person name="Henningsen J."/>
            <person name="Johansen P.T."/>
            <person name="Kratchmarova I."/>
            <person name="Kassem M."/>
            <person name="Mann M."/>
            <person name="Olsen J.V."/>
            <person name="Blagoev B."/>
        </authorList>
    </citation>
    <scope>PHOSPHORYLATION [LARGE SCALE ANALYSIS] AT SER-781</scope>
    <scope>IDENTIFICATION BY MASS SPECTROMETRY [LARGE SCALE ANALYSIS]</scope>
</reference>
<reference key="15">
    <citation type="journal article" date="2012" name="Mol. Cell. Proteomics">
        <title>Comparative large-scale characterisation of plant vs. mammal proteins reveals similar and idiosyncratic N-alpha acetylation features.</title>
        <authorList>
            <person name="Bienvenut W.V."/>
            <person name="Sumpton D."/>
            <person name="Martinez A."/>
            <person name="Lilla S."/>
            <person name="Espagne C."/>
            <person name="Meinnel T."/>
            <person name="Giglione C."/>
        </authorList>
    </citation>
    <scope>ACETYLATION [LARGE SCALE ANALYSIS] AT SER-2</scope>
    <scope>CLEAVAGE OF INITIATOR METHIONINE [LARGE SCALE ANALYSIS]</scope>
    <scope>IDENTIFICATION BY MASS SPECTROMETRY [LARGE SCALE ANALYSIS]</scope>
</reference>
<reference key="16">
    <citation type="journal article" date="2012" name="Proc. Natl. Acad. Sci. U.S.A.">
        <title>N-terminal acetylome analyses and functional insights of the N-terminal acetyltransferase NatB.</title>
        <authorList>
            <person name="Van Damme P."/>
            <person name="Lasa M."/>
            <person name="Polevoda B."/>
            <person name="Gazquez C."/>
            <person name="Elosegui-Artola A."/>
            <person name="Kim D.S."/>
            <person name="De Juan-Pardo E."/>
            <person name="Demeyer K."/>
            <person name="Hole K."/>
            <person name="Larrea E."/>
            <person name="Timmerman E."/>
            <person name="Prieto J."/>
            <person name="Arnesen T."/>
            <person name="Sherman F."/>
            <person name="Gevaert K."/>
            <person name="Aldabe R."/>
        </authorList>
    </citation>
    <scope>ACETYLATION [LARGE SCALE ANALYSIS] AT SER-2</scope>
    <scope>CLEAVAGE OF INITIATOR METHIONINE [LARGE SCALE ANALYSIS]</scope>
    <scope>IDENTIFICATION BY MASS SPECTROMETRY [LARGE SCALE ANALYSIS]</scope>
</reference>
<reference key="17">
    <citation type="journal article" date="2013" name="J. Proteome Res.">
        <title>Toward a comprehensive characterization of a human cancer cell phosphoproteome.</title>
        <authorList>
            <person name="Zhou H."/>
            <person name="Di Palma S."/>
            <person name="Preisinger C."/>
            <person name="Peng M."/>
            <person name="Polat A.N."/>
            <person name="Heck A.J."/>
            <person name="Mohammed S."/>
        </authorList>
    </citation>
    <scope>PHOSPHORYLATION [LARGE SCALE ANALYSIS] AT THR-624; SER-781 AND SER-897</scope>
    <scope>IDENTIFICATION BY MASS SPECTROMETRY [LARGE SCALE ANALYSIS]</scope>
    <source>
        <tissue>Cervix carcinoma</tissue>
        <tissue>Erythroleukemia</tissue>
    </source>
</reference>
<reference key="18">
    <citation type="journal article" date="2014" name="Cell Rep.">
        <title>The RNA helicase DHX34 activates NMD by promoting a transition from the surveillance to the decay-inducing complex.</title>
        <authorList>
            <person name="Hug N."/>
            <person name="Caceres J.F."/>
        </authorList>
    </citation>
    <scope>INTERACTION WITH DHX34</scope>
</reference>
<reference key="19">
    <citation type="journal article" date="2005" name="Mol. Cell">
        <title>SMG7 is a 14-3-3-like adaptor in the nonsense-mediated mRNA decay pathway.</title>
        <authorList>
            <person name="Fukuhara N."/>
            <person name="Ebert J."/>
            <person name="Unterholzner L."/>
            <person name="Lindner D."/>
            <person name="Izaurralde E."/>
            <person name="Conti E."/>
        </authorList>
    </citation>
    <scope>X-RAY CRYSTALLOGRAPHY (2.55 ANGSTROMS) OF 1-497</scope>
    <scope>FUNCTION</scope>
    <scope>INTERACTION WITH SMG5 AND PHOSPHORYLATED RENT1</scope>
    <scope>SUBCELLULAR LOCATION</scope>
    <scope>TPR REPEAT</scope>
    <scope>MUTAGENESIS OF LYS-66 AND ARG-163</scope>
</reference>
<dbReference type="EMBL" id="AB085674">
    <property type="protein sequence ID" value="BAC53621.1"/>
    <property type="molecule type" value="mRNA"/>
</dbReference>
<dbReference type="EMBL" id="D87437">
    <property type="protein sequence ID" value="BAA13381.2"/>
    <property type="status" value="ALT_INIT"/>
    <property type="molecule type" value="mRNA"/>
</dbReference>
<dbReference type="EMBL" id="AK299178">
    <property type="protein sequence ID" value="BAG61224.1"/>
    <property type="molecule type" value="mRNA"/>
</dbReference>
<dbReference type="EMBL" id="AL449223">
    <property type="status" value="NOT_ANNOTATED_CDS"/>
    <property type="molecule type" value="Genomic_DNA"/>
</dbReference>
<dbReference type="EMBL" id="AL137800">
    <property type="status" value="NOT_ANNOTATED_CDS"/>
    <property type="molecule type" value="Genomic_DNA"/>
</dbReference>
<dbReference type="EMBL" id="BC036381">
    <property type="protein sequence ID" value="AAH36381.1"/>
    <property type="molecule type" value="mRNA"/>
</dbReference>
<dbReference type="EMBL" id="BC052565">
    <property type="protein sequence ID" value="AAH52565.1"/>
    <property type="molecule type" value="mRNA"/>
</dbReference>
<dbReference type="CCDS" id="CCDS1355.1">
    <molecule id="Q92540-1"/>
</dbReference>
<dbReference type="CCDS" id="CCDS41445.2">
    <molecule id="Q92540-4"/>
</dbReference>
<dbReference type="CCDS" id="CCDS53444.1">
    <molecule id="Q92540-2"/>
</dbReference>
<dbReference type="CCDS" id="CCDS53445.1">
    <molecule id="Q92540-5"/>
</dbReference>
<dbReference type="RefSeq" id="NP_001167532.1">
    <molecule id="Q92540-5"/>
    <property type="nucleotide sequence ID" value="NM_001174061.2"/>
</dbReference>
<dbReference type="RefSeq" id="NP_001381066.1">
    <molecule id="Q92540-5"/>
    <property type="nucleotide sequence ID" value="NM_001394137.1"/>
</dbReference>
<dbReference type="RefSeq" id="NP_775179.1">
    <molecule id="Q92540-1"/>
    <property type="nucleotide sequence ID" value="NM_173156.3"/>
</dbReference>
<dbReference type="RefSeq" id="NP_963862.1">
    <molecule id="Q92540-2"/>
    <property type="nucleotide sequence ID" value="NM_201568.3"/>
</dbReference>
<dbReference type="RefSeq" id="NP_963863.2">
    <molecule id="Q92540-4"/>
    <property type="nucleotide sequence ID" value="NM_201569.3"/>
</dbReference>
<dbReference type="PDB" id="1YA0">
    <property type="method" value="X-ray"/>
    <property type="resolution" value="2.55 A"/>
    <property type="chains" value="A/B=1-497"/>
</dbReference>
<dbReference type="PDBsum" id="1YA0"/>
<dbReference type="SMR" id="Q92540"/>
<dbReference type="BioGRID" id="115218">
    <property type="interactions" value="328"/>
</dbReference>
<dbReference type="FunCoup" id="Q92540">
    <property type="interactions" value="3915"/>
</dbReference>
<dbReference type="IntAct" id="Q92540">
    <property type="interactions" value="78"/>
</dbReference>
<dbReference type="MINT" id="Q92540"/>
<dbReference type="STRING" id="9606.ENSP00000425133"/>
<dbReference type="ChEMBL" id="CHEMBL5465340"/>
<dbReference type="GlyCosmos" id="Q92540">
    <property type="glycosylation" value="3 sites, 2 glycans"/>
</dbReference>
<dbReference type="GlyGen" id="Q92540">
    <property type="glycosylation" value="4 sites, 2 O-linked glycans (4 sites)"/>
</dbReference>
<dbReference type="iPTMnet" id="Q92540"/>
<dbReference type="PhosphoSitePlus" id="Q92540"/>
<dbReference type="BioMuta" id="SMG7"/>
<dbReference type="DMDM" id="84028262"/>
<dbReference type="jPOST" id="Q92540"/>
<dbReference type="MassIVE" id="Q92540"/>
<dbReference type="PaxDb" id="9606-ENSP00000425133"/>
<dbReference type="PeptideAtlas" id="Q92540"/>
<dbReference type="ProteomicsDB" id="19450"/>
<dbReference type="ProteomicsDB" id="19888"/>
<dbReference type="ProteomicsDB" id="75298">
    <molecule id="Q92540-1"/>
</dbReference>
<dbReference type="ProteomicsDB" id="75299">
    <molecule id="Q92540-2"/>
</dbReference>
<dbReference type="ProteomicsDB" id="75300">
    <molecule id="Q92540-4"/>
</dbReference>
<dbReference type="Pumba" id="Q92540"/>
<dbReference type="Antibodypedia" id="34445">
    <property type="antibodies" value="104 antibodies from 23 providers"/>
</dbReference>
<dbReference type="DNASU" id="9887"/>
<dbReference type="Ensembl" id="ENST00000347615.6">
    <molecule id="Q92540-1"/>
    <property type="protein sequence ID" value="ENSP00000340766.2"/>
    <property type="gene ID" value="ENSG00000116698.22"/>
</dbReference>
<dbReference type="Ensembl" id="ENST00000507469.5">
    <molecule id="Q92540-4"/>
    <property type="protein sequence ID" value="ENSP00000425133.1"/>
    <property type="gene ID" value="ENSG00000116698.22"/>
</dbReference>
<dbReference type="Ensembl" id="ENST00000508461.5">
    <molecule id="Q92540-5"/>
    <property type="protein sequence ID" value="ENSP00000426915.1"/>
    <property type="gene ID" value="ENSG00000116698.22"/>
</dbReference>
<dbReference type="Ensembl" id="ENST00000515829.6">
    <molecule id="Q92540-2"/>
    <property type="protein sequence ID" value="ENSP00000421358.2"/>
    <property type="gene ID" value="ENSG00000116698.22"/>
</dbReference>
<dbReference type="GeneID" id="9887"/>
<dbReference type="KEGG" id="hsa:9887"/>
<dbReference type="UCSC" id="uc001gqf.4">
    <molecule id="Q92540-1"/>
    <property type="organism name" value="human"/>
</dbReference>
<dbReference type="AGR" id="HGNC:16792"/>
<dbReference type="CTD" id="9887"/>
<dbReference type="DisGeNET" id="9887"/>
<dbReference type="GeneCards" id="SMG7"/>
<dbReference type="HGNC" id="HGNC:16792">
    <property type="gene designation" value="SMG7"/>
</dbReference>
<dbReference type="HPA" id="ENSG00000116698">
    <property type="expression patterns" value="Low tissue specificity"/>
</dbReference>
<dbReference type="MIM" id="610964">
    <property type="type" value="gene"/>
</dbReference>
<dbReference type="neXtProt" id="NX_Q92540"/>
<dbReference type="OpenTargets" id="ENSG00000116698"/>
<dbReference type="PharmGKB" id="PA25605"/>
<dbReference type="VEuPathDB" id="HostDB:ENSG00000116698"/>
<dbReference type="eggNOG" id="KOG2162">
    <property type="taxonomic scope" value="Eukaryota"/>
</dbReference>
<dbReference type="GeneTree" id="ENSGT00940000158333"/>
<dbReference type="HOGENOM" id="CLU_009299_0_0_1"/>
<dbReference type="InParanoid" id="Q92540"/>
<dbReference type="OMA" id="WHQAGSA"/>
<dbReference type="OrthoDB" id="69928at2759"/>
<dbReference type="PAN-GO" id="Q92540">
    <property type="GO annotations" value="4 GO annotations based on evolutionary models"/>
</dbReference>
<dbReference type="PhylomeDB" id="Q92540"/>
<dbReference type="TreeFam" id="TF327119"/>
<dbReference type="PathwayCommons" id="Q92540"/>
<dbReference type="Reactome" id="R-HSA-975957">
    <property type="pathway name" value="Nonsense Mediated Decay (NMD) enhanced by the Exon Junction Complex (EJC)"/>
</dbReference>
<dbReference type="SignaLink" id="Q92540"/>
<dbReference type="BioGRID-ORCS" id="9887">
    <property type="hits" value="401 hits in 1181 CRISPR screens"/>
</dbReference>
<dbReference type="CD-CODE" id="232F8A39">
    <property type="entry name" value="P-body"/>
</dbReference>
<dbReference type="CD-CODE" id="91857CE7">
    <property type="entry name" value="Nucleolus"/>
</dbReference>
<dbReference type="CD-CODE" id="DEE660B4">
    <property type="entry name" value="Stress granule"/>
</dbReference>
<dbReference type="ChiTaRS" id="SMG7">
    <property type="organism name" value="human"/>
</dbReference>
<dbReference type="EvolutionaryTrace" id="Q92540"/>
<dbReference type="GeneWiki" id="SMG7"/>
<dbReference type="GenomeRNAi" id="9887"/>
<dbReference type="Pharos" id="Q92540">
    <property type="development level" value="Tbio"/>
</dbReference>
<dbReference type="PRO" id="PR:Q92540"/>
<dbReference type="Proteomes" id="UP000005640">
    <property type="component" value="Chromosome 1"/>
</dbReference>
<dbReference type="RNAct" id="Q92540">
    <property type="molecule type" value="protein"/>
</dbReference>
<dbReference type="Bgee" id="ENSG00000116698">
    <property type="expression patterns" value="Expressed in medial globus pallidus and 203 other cell types or tissues"/>
</dbReference>
<dbReference type="ExpressionAtlas" id="Q92540">
    <property type="expression patterns" value="baseline and differential"/>
</dbReference>
<dbReference type="GO" id="GO:0005737">
    <property type="term" value="C:cytoplasm"/>
    <property type="evidence" value="ECO:0000314"/>
    <property type="project" value="HGNC-UCL"/>
</dbReference>
<dbReference type="GO" id="GO:0005829">
    <property type="term" value="C:cytosol"/>
    <property type="evidence" value="ECO:0000314"/>
    <property type="project" value="HPA"/>
</dbReference>
<dbReference type="GO" id="GO:0005634">
    <property type="term" value="C:nucleus"/>
    <property type="evidence" value="ECO:0000314"/>
    <property type="project" value="HGNC-UCL"/>
</dbReference>
<dbReference type="GO" id="GO:0005697">
    <property type="term" value="C:telomerase holoenzyme complex"/>
    <property type="evidence" value="ECO:0000318"/>
    <property type="project" value="GO_Central"/>
</dbReference>
<dbReference type="GO" id="GO:0051721">
    <property type="term" value="F:protein phosphatase 2A binding"/>
    <property type="evidence" value="ECO:0000314"/>
    <property type="project" value="HGNC-UCL"/>
</dbReference>
<dbReference type="GO" id="GO:0070034">
    <property type="term" value="F:telomerase RNA binding"/>
    <property type="evidence" value="ECO:0000318"/>
    <property type="project" value="GO_Central"/>
</dbReference>
<dbReference type="GO" id="GO:0042162">
    <property type="term" value="F:telomeric DNA binding"/>
    <property type="evidence" value="ECO:0000314"/>
    <property type="project" value="BHF-UCL"/>
</dbReference>
<dbReference type="GO" id="GO:0006406">
    <property type="term" value="P:mRNA export from nucleus"/>
    <property type="evidence" value="ECO:0000304"/>
    <property type="project" value="HGNC-UCL"/>
</dbReference>
<dbReference type="GO" id="GO:0000184">
    <property type="term" value="P:nuclear-transcribed mRNA catabolic process, nonsense-mediated decay"/>
    <property type="evidence" value="ECO:0000318"/>
    <property type="project" value="GO_Central"/>
</dbReference>
<dbReference type="GO" id="GO:0035303">
    <property type="term" value="P:regulation of dephosphorylation"/>
    <property type="evidence" value="ECO:0000304"/>
    <property type="project" value="HGNC-UCL"/>
</dbReference>
<dbReference type="DisProt" id="DP01844"/>
<dbReference type="Gene3D" id="1.25.40.10">
    <property type="entry name" value="Tetratricopeptide repeat domain"/>
    <property type="match status" value="1"/>
</dbReference>
<dbReference type="IDEAL" id="IID00090"/>
<dbReference type="InterPro" id="IPR018834">
    <property type="entry name" value="DNA/RNA-bd_Est1-type"/>
</dbReference>
<dbReference type="InterPro" id="IPR019458">
    <property type="entry name" value="Est1-like_N"/>
</dbReference>
<dbReference type="InterPro" id="IPR045153">
    <property type="entry name" value="Est1/Ebs1-like"/>
</dbReference>
<dbReference type="InterPro" id="IPR011990">
    <property type="entry name" value="TPR-like_helical_dom_sf"/>
</dbReference>
<dbReference type="PANTHER" id="PTHR15696:SF5">
    <property type="entry name" value="NONSENSE-MEDIATED MRNA DECAY FACTOR SMG7"/>
    <property type="match status" value="1"/>
</dbReference>
<dbReference type="PANTHER" id="PTHR15696">
    <property type="entry name" value="SMG-7 SUPPRESSOR WITH MORPHOLOGICAL EFFECT ON GENITALIA PROTEIN 7"/>
    <property type="match status" value="1"/>
</dbReference>
<dbReference type="Pfam" id="PF10374">
    <property type="entry name" value="EST1"/>
    <property type="match status" value="1"/>
</dbReference>
<dbReference type="Pfam" id="PF10373">
    <property type="entry name" value="EST1_DNA_bind"/>
    <property type="match status" value="1"/>
</dbReference>
<dbReference type="SUPFAM" id="SSF48452">
    <property type="entry name" value="TPR-like"/>
    <property type="match status" value="1"/>
</dbReference>
<keyword id="KW-0002">3D-structure</keyword>
<keyword id="KW-0007">Acetylation</keyword>
<keyword id="KW-0025">Alternative splicing</keyword>
<keyword id="KW-0963">Cytoplasm</keyword>
<keyword id="KW-0866">Nonsense-mediated mRNA decay</keyword>
<keyword id="KW-0539">Nucleus</keyword>
<keyword id="KW-0597">Phosphoprotein</keyword>
<keyword id="KW-1267">Proteomics identification</keyword>
<keyword id="KW-1185">Reference proteome</keyword>
<keyword id="KW-0677">Repeat</keyword>
<keyword id="KW-0802">TPR repeat</keyword>
<sequence>MSLQSAQYLRQAEVLKADMTDSKLGPAEVWTSRQALQDLYQKMLVTDLEYALDKKVEQDLWNHAFKNQITTLQGQAKNRANPNRSEVQANLSLFLEAASGFYTQLLQELCTVFNVDLPCRVKSSQLGIISNKQTHTSAIVKPQSSSCSYICQHCLVHLGDIARYRNQTSQAESYYRHAAQLVPSNGQPYNQLAILASSKGDHLTTIFYYCRSIAVKFPFPAASTNLQKALSKALESRDEVKTKWGVSDFIKAFIKFHGHVYLSKSLEKLSPLREKLEEQFKRLLFQKAFNSQQLVHVTVINLFQLHHLRDFSNETEQHTYSQDEQLCWTQLLALFMSFLGILCKCPLQNESQEESYNAYPLPAVKVSMDWLRLRPRVFQEAVVDERQYIWPWLISLLNSFHPHEEDLSSISATPLPEEFELQGFLALRPSFRNLDFSKGHQGITGDKEGQQRRIRQQRLISIGKWIADNQPRLIQCENEVGKLLFITEIPELILEDPSEAKENLILQETSVIESLAADGSPGLKSVLSTSRNLSNNCDTGEKPVVTFKENIKTREVNRDQGRSFPPKEVRRDYSKGITVTKNDGKKDNNKRKTETKKCTLEKLQETGKQNVAVQVKSQTELRKTPVSEARKTPVTQTPTQASNSQFIPIHHPGAFPPLPSRPGFPPPTYVIPPPVAFSMGSGYTFPAGVSVPGTFLQPTAHSPAGNQVQAGKQSHIPYSQQRPSGPGPMNQGPQQSQPPSQQPLTSLPAQPTAQSTSQLQVQALTQQQQSPTKAVPALGKSPPHHSGFQQYQQADASKQLWNPPQVQGPLGKIMPVKQPYYLQTQDPIKLFEPSLQPPVMQQQPLEKKMKPFPMEPYNHNPSEVKVPEFYWDSSYSMADNRSVMAQQANIDRRGKRSPGVFRPEQDPVPRMPFEKSLLEKPSELMSHSSSFLSLTGFSLNQERYPNNSMFNEVYGKNLTSSSKAELSPSMAPQETSLYSLFEGTPWSPSLPASSDHSTPASQSPHSSNPSSLPSSPPTHNHNSVPFSNFGPIGTPDNRDRRTADRWKTDKPAMGGFGIDYLSATSSSESSWHQASTPSGTWTGHGPSMEDSSAVLMESLKSIWSSSMMHPGPSALEQLLMQQKQKQQRGQGTMNPPH</sequence>
<gene>
    <name evidence="12" type="primary">SMG7</name>
    <name evidence="12" type="synonym">C1orf16</name>
    <name evidence="12" type="synonym">EST1C</name>
    <name evidence="12" type="synonym">KIAA0250</name>
</gene>
<accession>Q92540</accession>
<accession>B4DRB2</accession>
<accession>E9PCI0</accession>
<accession>E9PEH2</accession>
<accession>Q5T1Q0</accession>
<accession>Q6PIE0</accession>
<accession>Q7Z7H9</accession>
<accession>Q8IXC1</accession>
<accession>Q8IXC2</accession>
<organism>
    <name type="scientific">Homo sapiens</name>
    <name type="common">Human</name>
    <dbReference type="NCBI Taxonomy" id="9606"/>
    <lineage>
        <taxon>Eukaryota</taxon>
        <taxon>Metazoa</taxon>
        <taxon>Chordata</taxon>
        <taxon>Craniata</taxon>
        <taxon>Vertebrata</taxon>
        <taxon>Euteleostomi</taxon>
        <taxon>Mammalia</taxon>
        <taxon>Eutheria</taxon>
        <taxon>Euarchontoglires</taxon>
        <taxon>Primates</taxon>
        <taxon>Haplorrhini</taxon>
        <taxon>Catarrhini</taxon>
        <taxon>Hominidae</taxon>
        <taxon>Homo</taxon>
    </lineage>
</organism>
<feature type="initiator methionine" description="Removed" evidence="15 18 19">
    <location>
        <position position="1"/>
    </location>
</feature>
<feature type="chain" id="PRO_0000076324" description="Nonsense-mediated mRNA decay factor SMG7">
    <location>
        <begin position="2"/>
        <end position="1137"/>
    </location>
</feature>
<feature type="repeat" description="TPR 1" evidence="5">
    <location>
        <begin position="152"/>
        <end position="185"/>
    </location>
</feature>
<feature type="repeat" description="TPR 2" evidence="5">
    <location>
        <begin position="187"/>
        <end position="219"/>
    </location>
</feature>
<feature type="region of interest" description="Disordered" evidence="1">
    <location>
        <begin position="620"/>
        <end position="646"/>
    </location>
</feature>
<feature type="region of interest" description="Disordered" evidence="1">
    <location>
        <begin position="696"/>
        <end position="794"/>
    </location>
</feature>
<feature type="region of interest" description="Disordered" evidence="1">
    <location>
        <begin position="890"/>
        <end position="911"/>
    </location>
</feature>
<feature type="region of interest" description="Disordered" evidence="1">
    <location>
        <begin position="988"/>
        <end position="1055"/>
    </location>
</feature>
<feature type="region of interest" description="Disordered" evidence="1">
    <location>
        <begin position="1069"/>
        <end position="1089"/>
    </location>
</feature>
<feature type="region of interest" description="Disordered" evidence="1">
    <location>
        <begin position="1104"/>
        <end position="1137"/>
    </location>
</feature>
<feature type="compositionally biased region" description="Basic and acidic residues" evidence="1">
    <location>
        <begin position="620"/>
        <end position="631"/>
    </location>
</feature>
<feature type="compositionally biased region" description="Polar residues" evidence="1">
    <location>
        <begin position="633"/>
        <end position="646"/>
    </location>
</feature>
<feature type="compositionally biased region" description="Polar residues" evidence="1">
    <location>
        <begin position="696"/>
        <end position="722"/>
    </location>
</feature>
<feature type="compositionally biased region" description="Low complexity" evidence="1">
    <location>
        <begin position="723"/>
        <end position="770"/>
    </location>
</feature>
<feature type="compositionally biased region" description="Polar residues" evidence="1">
    <location>
        <begin position="988"/>
        <end position="998"/>
    </location>
</feature>
<feature type="compositionally biased region" description="Low complexity" evidence="1">
    <location>
        <begin position="999"/>
        <end position="1025"/>
    </location>
</feature>
<feature type="compositionally biased region" description="Basic and acidic residues" evidence="1">
    <location>
        <begin position="1036"/>
        <end position="1050"/>
    </location>
</feature>
<feature type="compositionally biased region" description="Polar residues" evidence="1">
    <location>
        <begin position="1069"/>
        <end position="1081"/>
    </location>
</feature>
<feature type="compositionally biased region" description="Low complexity" evidence="1">
    <location>
        <begin position="1117"/>
        <end position="1131"/>
    </location>
</feature>
<feature type="modified residue" description="N-acetylserine" evidence="15 18 19">
    <location>
        <position position="2"/>
    </location>
</feature>
<feature type="modified residue" description="Phosphoserine" evidence="14">
    <location>
        <position position="520"/>
    </location>
</feature>
<feature type="modified residue" description="Phosphothreonine" evidence="20">
    <location>
        <position position="624"/>
    </location>
</feature>
<feature type="modified residue" description="Phosphoserine" evidence="13 14 16 17 20">
    <location>
        <position position="781"/>
    </location>
</feature>
<feature type="modified residue" description="Phosphoserine" evidence="20">
    <location>
        <position position="897"/>
    </location>
</feature>
<feature type="splice variant" id="VSP_047130" description="In isoform 5." evidence="8">
    <location>
        <begin position="1"/>
        <end position="42"/>
    </location>
</feature>
<feature type="splice variant" id="VSP_016574" description="In isoform 2 and isoform 4." evidence="9 10">
    <location>
        <begin position="569"/>
        <end position="614"/>
    </location>
</feature>
<feature type="splice variant" id="VSP_016575" description="In isoform 4 and isoform 5." evidence="8 9">
    <original>E</original>
    <variation>EDPKSSPLLPPDLLKSLAALEEEEELIFSNPPDLYPALLGPLASLPGRSLF</variation>
    <location>
        <position position="914"/>
    </location>
</feature>
<feature type="splice variant" id="VSP_016576" description="In isoform 4." evidence="9">
    <original>SIWSSSMMHPGPSALEQLLMQQKQKQQRGQGTMNPPH</original>
    <variation>KQQHGVQQLGPKRQSEEEGSSSICVAHRGPRPLPSCSLPASTFRVKFKAARTCAHQAQKKTRRRPFWKRRKKGK</variation>
    <location>
        <begin position="1101"/>
        <end position="1137"/>
    </location>
</feature>
<feature type="sequence variant" id="VAR_051363" description="In dbSNP:rs34221194.">
    <original>S</original>
    <variation>F</variation>
    <location>
        <position position="627"/>
    </location>
</feature>
<feature type="sequence variant" id="VAR_051364" description="In dbSNP:rs2298083." evidence="3 7">
    <original>V</original>
    <variation>I</variation>
    <location>
        <position position="900"/>
    </location>
</feature>
<feature type="mutagenesis site" description="Abolishes interaction with UPF1; when associated with E-163." evidence="5">
    <original>K</original>
    <variation>E</variation>
    <location>
        <position position="66"/>
    </location>
</feature>
<feature type="mutagenesis site" description="Abolishes interaction with UPF1; when associated with E-66." evidence="5">
    <original>R</original>
    <variation>E</variation>
    <location>
        <position position="163"/>
    </location>
</feature>
<feature type="sequence conflict" description="In Ref. 4; BAG61224." evidence="11" ref="4">
    <original>Q</original>
    <variation>R</variation>
    <location>
        <position position="187"/>
    </location>
</feature>
<feature type="sequence conflict" description="In Ref. 1; BAC53621." evidence="11" ref="1">
    <original>R</original>
    <variation>E</variation>
    <location>
        <position position="282"/>
    </location>
</feature>
<feature type="helix" evidence="21">
    <location>
        <begin position="2"/>
        <end position="16"/>
    </location>
</feature>
<feature type="helix" evidence="21">
    <location>
        <begin position="17"/>
        <end position="19"/>
    </location>
</feature>
<feature type="strand" evidence="21">
    <location>
        <begin position="22"/>
        <end position="24"/>
    </location>
</feature>
<feature type="strand" evidence="21">
    <location>
        <begin position="26"/>
        <end position="29"/>
    </location>
</feature>
<feature type="helix" evidence="21">
    <location>
        <begin position="30"/>
        <end position="46"/>
    </location>
</feature>
<feature type="helix" evidence="21">
    <location>
        <begin position="48"/>
        <end position="54"/>
    </location>
</feature>
<feature type="helix" evidence="21">
    <location>
        <begin position="56"/>
        <end position="64"/>
    </location>
</feature>
<feature type="helix" evidence="21">
    <location>
        <begin position="66"/>
        <end position="76"/>
    </location>
</feature>
<feature type="turn" evidence="21">
    <location>
        <begin position="82"/>
        <end position="85"/>
    </location>
</feature>
<feature type="helix" evidence="21">
    <location>
        <begin position="86"/>
        <end position="109"/>
    </location>
</feature>
<feature type="helix" evidence="21">
    <location>
        <begin position="145"/>
        <end position="164"/>
    </location>
</feature>
<feature type="helix" evidence="21">
    <location>
        <begin position="168"/>
        <end position="181"/>
    </location>
</feature>
<feature type="helix" evidence="21">
    <location>
        <begin position="187"/>
        <end position="198"/>
    </location>
</feature>
<feature type="helix" evidence="21">
    <location>
        <begin position="202"/>
        <end position="213"/>
    </location>
</feature>
<feature type="strand" evidence="21">
    <location>
        <begin position="214"/>
        <end position="217"/>
    </location>
</feature>
<feature type="helix" evidence="21">
    <location>
        <begin position="220"/>
        <end position="233"/>
    </location>
</feature>
<feature type="helix" evidence="21">
    <location>
        <begin position="246"/>
        <end position="262"/>
    </location>
</feature>
<feature type="helix" evidence="21">
    <location>
        <begin position="266"/>
        <end position="268"/>
    </location>
</feature>
<feature type="helix" evidence="21">
    <location>
        <begin position="269"/>
        <end position="285"/>
    </location>
</feature>
<feature type="helix" evidence="21">
    <location>
        <begin position="291"/>
        <end position="308"/>
    </location>
</feature>
<feature type="helix" evidence="21">
    <location>
        <begin position="311"/>
        <end position="314"/>
    </location>
</feature>
<feature type="helix" evidence="21">
    <location>
        <begin position="322"/>
        <end position="347"/>
    </location>
</feature>
<feature type="strand" evidence="21">
    <location>
        <begin position="356"/>
        <end position="360"/>
    </location>
</feature>
<feature type="helix" evidence="21">
    <location>
        <begin position="361"/>
        <end position="371"/>
    </location>
</feature>
<feature type="helix" evidence="21">
    <location>
        <begin position="375"/>
        <end position="379"/>
    </location>
</feature>
<feature type="helix" evidence="21">
    <location>
        <begin position="381"/>
        <end position="384"/>
    </location>
</feature>
<feature type="turn" evidence="21">
    <location>
        <begin position="385"/>
        <end position="388"/>
    </location>
</feature>
<feature type="helix" evidence="21">
    <location>
        <begin position="390"/>
        <end position="397"/>
    </location>
</feature>
<feature type="helix" evidence="21">
    <location>
        <begin position="398"/>
        <end position="400"/>
    </location>
</feature>
<feature type="helix" evidence="21">
    <location>
        <begin position="416"/>
        <end position="420"/>
    </location>
</feature>
<feature type="turn" evidence="21">
    <location>
        <begin position="421"/>
        <end position="423"/>
    </location>
</feature>
<feature type="helix" evidence="21">
    <location>
        <begin position="425"/>
        <end position="427"/>
    </location>
</feature>
<feature type="helix" evidence="21">
    <location>
        <begin position="428"/>
        <end position="431"/>
    </location>
</feature>
<feature type="helix" evidence="21">
    <location>
        <begin position="449"/>
        <end position="469"/>
    </location>
</feature>
<feature type="turn" evidence="21">
    <location>
        <begin position="471"/>
        <end position="473"/>
    </location>
</feature>
<feature type="strand" evidence="21">
    <location>
        <begin position="475"/>
        <end position="479"/>
    </location>
</feature>
<feature type="strand" evidence="21">
    <location>
        <begin position="482"/>
        <end position="486"/>
    </location>
</feature>
<feature type="sequence conflict" description="In Ref. 5; AAH36381." evidence="11" ref="5">
    <original>V</original>
    <variation>I</variation>
    <location sequence="Q92540-4">
        <position position="854"/>
    </location>
</feature>
<feature type="sequence conflict" description="In Ref. 5; AAH36381." evidence="11" ref="5">
    <original>P</original>
    <variation>T</variation>
    <location sequence="Q92540-4">
        <position position="898"/>
    </location>
</feature>
<name>SMG7_HUMAN</name>
<comment type="function">
    <text evidence="4 5">Plays a role in nonsense-mediated mRNA decay. Recruits UPF1 to cytoplasmic mRNA decay bodies. Together with SMG5 is thought to provide a link to the mRNA degradation machinery involving exonucleolytic pathways, and to serve as an adapter for UPF1 to protein phosphatase 2A (PP2A), thereby triggering UPF1 dephosphorylation.</text>
</comment>
<comment type="subunit">
    <text evidence="2 6">Part of a complex that contains SMG5, SMG7, PPP2CA, a short isoform of UPF3A (isoform UPF3AS, but not isoform UPF3AL) and phosphorylated UPF1 (PubMed:14636577). Interacts with DHX34; the interaction is RNA-independent (PubMed:25220460).</text>
</comment>
<comment type="interaction">
    <interactant intactId="EBI-719830">
        <id>Q92540</id>
    </interactant>
    <interactant intactId="EBI-3400861">
        <id>Q9UPR3</id>
        <label>SMG5</label>
    </interactant>
    <organismsDiffer>false</organismsDiffer>
    <experiments>5</experiments>
</comment>
<comment type="interaction">
    <interactant intactId="EBI-719830">
        <id>Q92540</id>
    </interactant>
    <interactant intactId="EBI-373471">
        <id>Q92900</id>
        <label>UPF1</label>
    </interactant>
    <organismsDiffer>false</organismsDiffer>
    <experiments>4</experiments>
</comment>
<comment type="subcellular location">
    <subcellularLocation>
        <location evidence="2">Cytoplasm</location>
    </subcellularLocation>
    <subcellularLocation>
        <location evidence="2">Nucleus</location>
    </subcellularLocation>
    <text evidence="2">Predominantly cytoplasmic, and nuclear. Shuttles between nucleus and cytoplasm.</text>
</comment>
<comment type="alternative products">
    <event type="alternative splicing"/>
    <isoform>
        <id>Q92540-1</id>
        <name>1</name>
        <sequence type="displayed"/>
    </isoform>
    <isoform>
        <id>Q92540-2</id>
        <name>2</name>
        <sequence type="described" ref="VSP_016574"/>
    </isoform>
    <isoform>
        <id>Q92540-4</id>
        <name>4</name>
        <sequence type="described" ref="VSP_016574 VSP_016575 VSP_016576"/>
    </isoform>
    <isoform>
        <id>Q92540-5</id>
        <name>5</name>
        <sequence type="described" ref="VSP_047130 VSP_016575"/>
    </isoform>
</comment>
<comment type="sequence caution" evidence="11">
    <conflict type="erroneous initiation">
        <sequence resource="EMBL-CDS" id="BAA13381"/>
    </conflict>
    <text>Extended N-terminus.</text>
</comment>
<evidence type="ECO:0000256" key="1">
    <source>
        <dbReference type="SAM" id="MobiDB-lite"/>
    </source>
</evidence>
<evidence type="ECO:0000269" key="2">
    <source>
    </source>
</evidence>
<evidence type="ECO:0000269" key="3">
    <source>
    </source>
</evidence>
<evidence type="ECO:0000269" key="4">
    <source>
    </source>
</evidence>
<evidence type="ECO:0000269" key="5">
    <source>
    </source>
</evidence>
<evidence type="ECO:0000269" key="6">
    <source>
    </source>
</evidence>
<evidence type="ECO:0000269" key="7">
    <source>
    </source>
</evidence>
<evidence type="ECO:0000303" key="8">
    <source>
    </source>
</evidence>
<evidence type="ECO:0000303" key="9">
    <source>
    </source>
</evidence>
<evidence type="ECO:0000303" key="10">
    <source>
    </source>
</evidence>
<evidence type="ECO:0000305" key="11"/>
<evidence type="ECO:0000312" key="12">
    <source>
        <dbReference type="HGNC" id="HGNC:16792"/>
    </source>
</evidence>
<evidence type="ECO:0007744" key="13">
    <source>
    </source>
</evidence>
<evidence type="ECO:0007744" key="14">
    <source>
    </source>
</evidence>
<evidence type="ECO:0007744" key="15">
    <source>
    </source>
</evidence>
<evidence type="ECO:0007744" key="16">
    <source>
    </source>
</evidence>
<evidence type="ECO:0007744" key="17">
    <source>
    </source>
</evidence>
<evidence type="ECO:0007744" key="18">
    <source>
    </source>
</evidence>
<evidence type="ECO:0007744" key="19">
    <source>
    </source>
</evidence>
<evidence type="ECO:0007744" key="20">
    <source>
    </source>
</evidence>
<evidence type="ECO:0007829" key="21">
    <source>
        <dbReference type="PDB" id="1YA0"/>
    </source>
</evidence>
<proteinExistence type="evidence at protein level"/>
<protein>
    <recommendedName>
        <fullName evidence="12">Nonsense-mediated mRNA decay factor SMG7</fullName>
    </recommendedName>
    <alternativeName>
        <fullName evidence="12">SMG-7 homolog</fullName>
        <shortName>hSMG-7</shortName>
    </alternativeName>
</protein>